<accession>B2UL32</accession>
<keyword id="KW-1003">Cell membrane</keyword>
<keyword id="KW-0406">Ion transport</keyword>
<keyword id="KW-0408">Iron</keyword>
<keyword id="KW-0472">Membrane</keyword>
<keyword id="KW-0479">Metal-binding</keyword>
<keyword id="KW-1185">Reference proteome</keyword>
<keyword id="KW-0812">Transmembrane</keyword>
<keyword id="KW-1133">Transmembrane helix</keyword>
<keyword id="KW-0813">Transport</keyword>
<keyword id="KW-0862">Zinc</keyword>
<keyword id="KW-0864">Zinc transport</keyword>
<evidence type="ECO:0000255" key="1">
    <source>
        <dbReference type="HAMAP-Rule" id="MF_00548"/>
    </source>
</evidence>
<name>ZUPT_AKKM8</name>
<gene>
    <name evidence="1" type="primary">zupT</name>
    <name type="ordered locus">Amuc_1483</name>
</gene>
<feature type="chain" id="PRO_1000128944" description="Zinc transporter ZupT">
    <location>
        <begin position="1"/>
        <end position="270"/>
    </location>
</feature>
<feature type="transmembrane region" description="Helical" evidence="1">
    <location>
        <begin position="8"/>
        <end position="28"/>
    </location>
</feature>
<feature type="transmembrane region" description="Helical" evidence="1">
    <location>
        <begin position="40"/>
        <end position="60"/>
    </location>
</feature>
<feature type="transmembrane region" description="Helical" evidence="1">
    <location>
        <begin position="78"/>
        <end position="98"/>
    </location>
</feature>
<feature type="transmembrane region" description="Helical" evidence="1">
    <location>
        <begin position="131"/>
        <end position="151"/>
    </location>
</feature>
<feature type="transmembrane region" description="Helical" evidence="1">
    <location>
        <begin position="162"/>
        <end position="182"/>
    </location>
</feature>
<feature type="transmembrane region" description="Helical" evidence="1">
    <location>
        <begin position="192"/>
        <end position="212"/>
    </location>
</feature>
<feature type="transmembrane region" description="Helical" evidence="1">
    <location>
        <begin position="216"/>
        <end position="236"/>
    </location>
</feature>
<feature type="transmembrane region" description="Helical" evidence="1">
    <location>
        <begin position="250"/>
        <end position="270"/>
    </location>
</feature>
<feature type="binding site" description="M2 metal binding site" evidence="1">
    <location>
        <position position="141"/>
    </location>
    <ligand>
        <name>Fe(2+)</name>
        <dbReference type="ChEBI" id="CHEBI:29033"/>
    </ligand>
</feature>
<feature type="binding site" description="M2 metal binding site" evidence="1">
    <location>
        <position position="144"/>
    </location>
    <ligand>
        <name>Fe(2+)</name>
        <dbReference type="ChEBI" id="CHEBI:29033"/>
    </ligand>
</feature>
<feature type="binding site" description="M1 metal binding site" evidence="1">
    <location>
        <position position="144"/>
    </location>
    <ligand>
        <name>Zn(2+)</name>
        <dbReference type="ChEBI" id="CHEBI:29105"/>
    </ligand>
</feature>
<feature type="binding site" description="M1 metal binding site" evidence="1">
    <location>
        <position position="169"/>
    </location>
    <ligand>
        <name>Zn(2+)</name>
        <dbReference type="ChEBI" id="CHEBI:29105"/>
    </ligand>
</feature>
<feature type="binding site" description="M2 metal binding site" evidence="1">
    <location>
        <position position="170"/>
    </location>
    <ligand>
        <name>Fe(2+)</name>
        <dbReference type="ChEBI" id="CHEBI:29033"/>
    </ligand>
</feature>
<feature type="binding site" description="M2 metal binding site" evidence="1">
    <location>
        <position position="173"/>
    </location>
    <ligand>
        <name>Fe(2+)</name>
        <dbReference type="ChEBI" id="CHEBI:29033"/>
    </ligand>
</feature>
<feature type="binding site" description="M1 metal binding site" evidence="1">
    <location>
        <position position="173"/>
    </location>
    <ligand>
        <name>Zn(2+)</name>
        <dbReference type="ChEBI" id="CHEBI:29105"/>
    </ligand>
</feature>
<feature type="binding site" description="M2 metal binding site" evidence="1">
    <location>
        <position position="202"/>
    </location>
    <ligand>
        <name>Fe(2+)</name>
        <dbReference type="ChEBI" id="CHEBI:29033"/>
    </ligand>
</feature>
<proteinExistence type="inferred from homology"/>
<dbReference type="EMBL" id="CP001071">
    <property type="protein sequence ID" value="ACD05305.1"/>
    <property type="molecule type" value="Genomic_DNA"/>
</dbReference>
<dbReference type="RefSeq" id="WP_012420520.1">
    <property type="nucleotide sequence ID" value="NZ_CP071807.1"/>
</dbReference>
<dbReference type="SMR" id="B2UL32"/>
<dbReference type="STRING" id="349741.Amuc_1483"/>
<dbReference type="TCDB" id="2.A.5.5.5">
    <property type="family name" value="the zinc (zn(2+))-iron (fe(2+)) permease (zip) family"/>
</dbReference>
<dbReference type="PaxDb" id="349741-Amuc_1483"/>
<dbReference type="KEGG" id="amu:Amuc_1483"/>
<dbReference type="eggNOG" id="COG0428">
    <property type="taxonomic scope" value="Bacteria"/>
</dbReference>
<dbReference type="HOGENOM" id="CLU_015114_1_3_0"/>
<dbReference type="OrthoDB" id="9787346at2"/>
<dbReference type="BioCyc" id="AMUC349741:G1GBX-1585-MONOMER"/>
<dbReference type="Proteomes" id="UP000001031">
    <property type="component" value="Chromosome"/>
</dbReference>
<dbReference type="GO" id="GO:0005886">
    <property type="term" value="C:plasma membrane"/>
    <property type="evidence" value="ECO:0007669"/>
    <property type="project" value="UniProtKB-SubCell"/>
</dbReference>
<dbReference type="GO" id="GO:0046872">
    <property type="term" value="F:metal ion binding"/>
    <property type="evidence" value="ECO:0007669"/>
    <property type="project" value="UniProtKB-KW"/>
</dbReference>
<dbReference type="GO" id="GO:0005385">
    <property type="term" value="F:zinc ion transmembrane transporter activity"/>
    <property type="evidence" value="ECO:0007669"/>
    <property type="project" value="UniProtKB-UniRule"/>
</dbReference>
<dbReference type="HAMAP" id="MF_00548">
    <property type="entry name" value="ZupT"/>
    <property type="match status" value="1"/>
</dbReference>
<dbReference type="InterPro" id="IPR003689">
    <property type="entry name" value="ZIP"/>
</dbReference>
<dbReference type="InterPro" id="IPR023498">
    <property type="entry name" value="Zn_transptr_ZupT"/>
</dbReference>
<dbReference type="NCBIfam" id="NF003243">
    <property type="entry name" value="PRK04201.1"/>
    <property type="match status" value="1"/>
</dbReference>
<dbReference type="PANTHER" id="PTHR11040:SF205">
    <property type="entry name" value="ZINC TRANSPORTER ZUPT"/>
    <property type="match status" value="1"/>
</dbReference>
<dbReference type="PANTHER" id="PTHR11040">
    <property type="entry name" value="ZINC/IRON TRANSPORTER"/>
    <property type="match status" value="1"/>
</dbReference>
<dbReference type="Pfam" id="PF02535">
    <property type="entry name" value="Zip"/>
    <property type="match status" value="1"/>
</dbReference>
<protein>
    <recommendedName>
        <fullName evidence="1">Zinc transporter ZupT</fullName>
    </recommendedName>
</protein>
<organism>
    <name type="scientific">Akkermansia muciniphila (strain ATCC BAA-835 / DSM 22959 / JCM 33894 / BCRC 81048 / CCUG 64013 / CIP 107961 / Muc)</name>
    <dbReference type="NCBI Taxonomy" id="349741"/>
    <lineage>
        <taxon>Bacteria</taxon>
        <taxon>Pseudomonadati</taxon>
        <taxon>Verrucomicrobiota</taxon>
        <taxon>Verrucomicrobiia</taxon>
        <taxon>Verrucomicrobiales</taxon>
        <taxon>Akkermansiaceae</taxon>
        <taxon>Akkermansia</taxon>
    </lineage>
</organism>
<comment type="function">
    <text evidence="1">Mediates zinc uptake. May also transport other divalent cations.</text>
</comment>
<comment type="catalytic activity">
    <reaction evidence="1">
        <text>Zn(2+)(in) = Zn(2+)(out)</text>
        <dbReference type="Rhea" id="RHEA:29351"/>
        <dbReference type="ChEBI" id="CHEBI:29105"/>
    </reaction>
</comment>
<comment type="subcellular location">
    <subcellularLocation>
        <location evidence="1">Cell membrane</location>
        <topology evidence="1">Multi-pass membrane protein</topology>
    </subcellularLocation>
</comment>
<comment type="similarity">
    <text evidence="1">Belongs to the ZIP transporter (TC 2.A.5) family. ZupT subfamily.</text>
</comment>
<reference key="1">
    <citation type="journal article" date="2011" name="PLoS ONE">
        <title>The genome of Akkermansia muciniphila, a dedicated intestinal mucin degrader, and its use in exploring intestinal metagenomes.</title>
        <authorList>
            <person name="van Passel M.W."/>
            <person name="Kant R."/>
            <person name="Zoetendal E.G."/>
            <person name="Plugge C.M."/>
            <person name="Derrien M."/>
            <person name="Malfatti S.A."/>
            <person name="Chain P.S."/>
            <person name="Woyke T."/>
            <person name="Palva A."/>
            <person name="de Vos W.M."/>
            <person name="Smidt H."/>
        </authorList>
    </citation>
    <scope>NUCLEOTIDE SEQUENCE [LARGE SCALE GENOMIC DNA]</scope>
    <source>
        <strain>ATCC BAA-835 / DSM 22959 / JCM 33894 / BCRC 81048 / CCUG 64013 / CIP 107961 / Muc</strain>
    </source>
</reference>
<sequence length="270" mass="28623">MDLSADHILVVFLLTTLAGLATGIGGFIAFFMKRTDTKALTFALGLSGGVMVYISLVELLGEAQHRLMEFEGHTAGSWIAIASFFGGIAVAALIDYLVPEDENPHEARGPEDIHGQASGEFSSSRIKRSGILFALAIGIHNFPEGIATFAAGLDSLTLGTSIALAVAVHNIPEGIAVAVPLYYGTGSRKKALFYSFLSGLAEPVGAAIAMFFLFHFLTPTVLAVLFASVAGIMVFISFDELLPMAERWGHHHISIMGIIAGMLLMAIVLI</sequence>